<keyword id="KW-0378">Hydrolase</keyword>
<keyword id="KW-0460">Magnesium</keyword>
<keyword id="KW-0464">Manganese</keyword>
<keyword id="KW-0479">Metal-binding</keyword>
<keyword id="KW-0904">Protein phosphatase</keyword>
<keyword id="KW-1185">Reference proteome</keyword>
<gene>
    <name type="ordered locus">At1g48040</name>
    <name type="ORF">F21D18.27</name>
    <name type="ORF">T2J15.5</name>
</gene>
<comment type="catalytic activity">
    <reaction>
        <text>O-phospho-L-seryl-[protein] + H2O = L-seryl-[protein] + phosphate</text>
        <dbReference type="Rhea" id="RHEA:20629"/>
        <dbReference type="Rhea" id="RHEA-COMP:9863"/>
        <dbReference type="Rhea" id="RHEA-COMP:11604"/>
        <dbReference type="ChEBI" id="CHEBI:15377"/>
        <dbReference type="ChEBI" id="CHEBI:29999"/>
        <dbReference type="ChEBI" id="CHEBI:43474"/>
        <dbReference type="ChEBI" id="CHEBI:83421"/>
        <dbReference type="EC" id="3.1.3.16"/>
    </reaction>
</comment>
<comment type="catalytic activity">
    <reaction>
        <text>O-phospho-L-threonyl-[protein] + H2O = L-threonyl-[protein] + phosphate</text>
        <dbReference type="Rhea" id="RHEA:47004"/>
        <dbReference type="Rhea" id="RHEA-COMP:11060"/>
        <dbReference type="Rhea" id="RHEA-COMP:11605"/>
        <dbReference type="ChEBI" id="CHEBI:15377"/>
        <dbReference type="ChEBI" id="CHEBI:30013"/>
        <dbReference type="ChEBI" id="CHEBI:43474"/>
        <dbReference type="ChEBI" id="CHEBI:61977"/>
        <dbReference type="EC" id="3.1.3.16"/>
    </reaction>
</comment>
<comment type="cofactor">
    <cofactor evidence="1">
        <name>Mg(2+)</name>
        <dbReference type="ChEBI" id="CHEBI:18420"/>
    </cofactor>
    <cofactor evidence="1">
        <name>Mn(2+)</name>
        <dbReference type="ChEBI" id="CHEBI:29035"/>
    </cofactor>
    <text evidence="1">Binds 2 magnesium or manganese ions per subunit.</text>
</comment>
<comment type="similarity">
    <text evidence="3">Belongs to the PP2C family.</text>
</comment>
<comment type="sequence caution" evidence="3">
    <conflict type="erroneous initiation">
        <sequence resource="EMBL-CDS" id="AAF79528"/>
    </conflict>
</comment>
<comment type="sequence caution" evidence="3">
    <conflict type="erroneous initiation">
        <sequence resource="EMBL-CDS" id="AAG51521"/>
    </conflict>
</comment>
<feature type="chain" id="PRO_0000367944" description="Probable protein phosphatase 2C 13">
    <location>
        <begin position="1"/>
        <end position="383"/>
    </location>
</feature>
<feature type="domain" description="PPM-type phosphatase" evidence="2">
    <location>
        <begin position="78"/>
        <end position="349"/>
    </location>
</feature>
<feature type="binding site" evidence="1">
    <location>
        <position position="121"/>
    </location>
    <ligand>
        <name>Mn(2+)</name>
        <dbReference type="ChEBI" id="CHEBI:29035"/>
        <label>1</label>
    </ligand>
</feature>
<feature type="binding site" evidence="1">
    <location>
        <position position="121"/>
    </location>
    <ligand>
        <name>Mn(2+)</name>
        <dbReference type="ChEBI" id="CHEBI:29035"/>
        <label>2</label>
    </ligand>
</feature>
<feature type="binding site" evidence="1">
    <location>
        <position position="122"/>
    </location>
    <ligand>
        <name>Mn(2+)</name>
        <dbReference type="ChEBI" id="CHEBI:29035"/>
        <label>1</label>
    </ligand>
</feature>
<feature type="binding site" evidence="1">
    <location>
        <position position="297"/>
    </location>
    <ligand>
        <name>Mn(2+)</name>
        <dbReference type="ChEBI" id="CHEBI:29035"/>
        <label>2</label>
    </ligand>
</feature>
<feature type="binding site" evidence="1">
    <location>
        <position position="340"/>
    </location>
    <ligand>
        <name>Mn(2+)</name>
        <dbReference type="ChEBI" id="CHEBI:29035"/>
        <label>2</label>
    </ligand>
</feature>
<feature type="sequence conflict" description="In Ref. 3; BAD44439." evidence="3" ref="3">
    <original>E</original>
    <variation>G</variation>
    <location>
        <position position="160"/>
    </location>
</feature>
<protein>
    <recommendedName>
        <fullName>Probable protein phosphatase 2C 13</fullName>
        <shortName>AtPP2C13</shortName>
        <ecNumber>3.1.3.16</ecNumber>
    </recommendedName>
</protein>
<name>P2C13_ARATH</name>
<organism>
    <name type="scientific">Arabidopsis thaliana</name>
    <name type="common">Mouse-ear cress</name>
    <dbReference type="NCBI Taxonomy" id="3702"/>
    <lineage>
        <taxon>Eukaryota</taxon>
        <taxon>Viridiplantae</taxon>
        <taxon>Streptophyta</taxon>
        <taxon>Embryophyta</taxon>
        <taxon>Tracheophyta</taxon>
        <taxon>Spermatophyta</taxon>
        <taxon>Magnoliopsida</taxon>
        <taxon>eudicotyledons</taxon>
        <taxon>Gunneridae</taxon>
        <taxon>Pentapetalae</taxon>
        <taxon>rosids</taxon>
        <taxon>malvids</taxon>
        <taxon>Brassicales</taxon>
        <taxon>Brassicaceae</taxon>
        <taxon>Camelineae</taxon>
        <taxon>Arabidopsis</taxon>
    </lineage>
</organism>
<accession>Q9LNF4</accession>
<accession>Q67XZ2</accession>
<accession>Q67ZV7</accession>
<evidence type="ECO:0000250" key="1"/>
<evidence type="ECO:0000255" key="2">
    <source>
        <dbReference type="PROSITE-ProRule" id="PRU01082"/>
    </source>
</evidence>
<evidence type="ECO:0000305" key="3"/>
<reference key="1">
    <citation type="journal article" date="2000" name="Nature">
        <title>Sequence and analysis of chromosome 1 of the plant Arabidopsis thaliana.</title>
        <authorList>
            <person name="Theologis A."/>
            <person name="Ecker J.R."/>
            <person name="Palm C.J."/>
            <person name="Federspiel N.A."/>
            <person name="Kaul S."/>
            <person name="White O."/>
            <person name="Alonso J."/>
            <person name="Altafi H."/>
            <person name="Araujo R."/>
            <person name="Bowman C.L."/>
            <person name="Brooks S.Y."/>
            <person name="Buehler E."/>
            <person name="Chan A."/>
            <person name="Chao Q."/>
            <person name="Chen H."/>
            <person name="Cheuk R.F."/>
            <person name="Chin C.W."/>
            <person name="Chung M.K."/>
            <person name="Conn L."/>
            <person name="Conway A.B."/>
            <person name="Conway A.R."/>
            <person name="Creasy T.H."/>
            <person name="Dewar K."/>
            <person name="Dunn P."/>
            <person name="Etgu P."/>
            <person name="Feldblyum T.V."/>
            <person name="Feng J.-D."/>
            <person name="Fong B."/>
            <person name="Fujii C.Y."/>
            <person name="Gill J.E."/>
            <person name="Goldsmith A.D."/>
            <person name="Haas B."/>
            <person name="Hansen N.F."/>
            <person name="Hughes B."/>
            <person name="Huizar L."/>
            <person name="Hunter J.L."/>
            <person name="Jenkins J."/>
            <person name="Johnson-Hopson C."/>
            <person name="Khan S."/>
            <person name="Khaykin E."/>
            <person name="Kim C.J."/>
            <person name="Koo H.L."/>
            <person name="Kremenetskaia I."/>
            <person name="Kurtz D.B."/>
            <person name="Kwan A."/>
            <person name="Lam B."/>
            <person name="Langin-Hooper S."/>
            <person name="Lee A."/>
            <person name="Lee J.M."/>
            <person name="Lenz C.A."/>
            <person name="Li J.H."/>
            <person name="Li Y.-P."/>
            <person name="Lin X."/>
            <person name="Liu S.X."/>
            <person name="Liu Z.A."/>
            <person name="Luros J.S."/>
            <person name="Maiti R."/>
            <person name="Marziali A."/>
            <person name="Militscher J."/>
            <person name="Miranda M."/>
            <person name="Nguyen M."/>
            <person name="Nierman W.C."/>
            <person name="Osborne B.I."/>
            <person name="Pai G."/>
            <person name="Peterson J."/>
            <person name="Pham P.K."/>
            <person name="Rizzo M."/>
            <person name="Rooney T."/>
            <person name="Rowley D."/>
            <person name="Sakano H."/>
            <person name="Salzberg S.L."/>
            <person name="Schwartz J.R."/>
            <person name="Shinn P."/>
            <person name="Southwick A.M."/>
            <person name="Sun H."/>
            <person name="Tallon L.J."/>
            <person name="Tambunga G."/>
            <person name="Toriumi M.J."/>
            <person name="Town C.D."/>
            <person name="Utterback T."/>
            <person name="Van Aken S."/>
            <person name="Vaysberg M."/>
            <person name="Vysotskaia V.S."/>
            <person name="Walker M."/>
            <person name="Wu D."/>
            <person name="Yu G."/>
            <person name="Fraser C.M."/>
            <person name="Venter J.C."/>
            <person name="Davis R.W."/>
        </authorList>
    </citation>
    <scope>NUCLEOTIDE SEQUENCE [LARGE SCALE GENOMIC DNA]</scope>
    <source>
        <strain>cv. Columbia</strain>
    </source>
</reference>
<reference key="2">
    <citation type="journal article" date="2017" name="Plant J.">
        <title>Araport11: a complete reannotation of the Arabidopsis thaliana reference genome.</title>
        <authorList>
            <person name="Cheng C.Y."/>
            <person name="Krishnakumar V."/>
            <person name="Chan A.P."/>
            <person name="Thibaud-Nissen F."/>
            <person name="Schobel S."/>
            <person name="Town C.D."/>
        </authorList>
    </citation>
    <scope>GENOME REANNOTATION</scope>
    <source>
        <strain>cv. Columbia</strain>
    </source>
</reference>
<reference key="3">
    <citation type="submission" date="2004-09" db="EMBL/GenBank/DDBJ databases">
        <title>Large-scale analysis of RIKEN Arabidopsis full-length (RAFL) cDNAs.</title>
        <authorList>
            <person name="Totoki Y."/>
            <person name="Seki M."/>
            <person name="Ishida J."/>
            <person name="Nakajima M."/>
            <person name="Enju A."/>
            <person name="Kamiya A."/>
            <person name="Narusaka M."/>
            <person name="Shin-i T."/>
            <person name="Nakagawa M."/>
            <person name="Sakamoto N."/>
            <person name="Oishi K."/>
            <person name="Kohara Y."/>
            <person name="Kobayashi M."/>
            <person name="Toyoda A."/>
            <person name="Sakaki Y."/>
            <person name="Sakurai T."/>
            <person name="Iida K."/>
            <person name="Akiyama K."/>
            <person name="Satou M."/>
            <person name="Toyoda T."/>
            <person name="Konagaya A."/>
            <person name="Carninci P."/>
            <person name="Kawai J."/>
            <person name="Hayashizaki Y."/>
            <person name="Shinozaki K."/>
        </authorList>
    </citation>
    <scope>NUCLEOTIDE SEQUENCE [LARGE SCALE MRNA]</scope>
    <source>
        <strain>cv. Columbia</strain>
    </source>
</reference>
<reference key="4">
    <citation type="submission" date="2004-08" db="EMBL/GenBank/DDBJ databases">
        <title>Arabidopsis ORF clones.</title>
        <authorList>
            <person name="Cheuk R.F."/>
            <person name="Chen H."/>
            <person name="Kim C.J."/>
            <person name="Shinn P."/>
            <person name="Ecker J.R."/>
        </authorList>
    </citation>
    <scope>NUCLEOTIDE SEQUENCE [LARGE SCALE MRNA] OF 7-383</scope>
    <source>
        <strain>cv. Columbia</strain>
    </source>
</reference>
<reference key="5">
    <citation type="journal article" date="2008" name="BMC Genomics">
        <title>Genome-wide and expression analysis of protein phosphatase 2C in rice and Arabidopsis.</title>
        <authorList>
            <person name="Xue T."/>
            <person name="Wang D."/>
            <person name="Zhang S."/>
            <person name="Ehlting J."/>
            <person name="Ni F."/>
            <person name="Jacab S."/>
            <person name="Zheng C."/>
            <person name="Zhong Y."/>
        </authorList>
    </citation>
    <scope>GENE FAMILY</scope>
    <scope>NOMENCLATURE</scope>
</reference>
<dbReference type="EC" id="3.1.3.16"/>
<dbReference type="EMBL" id="AC023673">
    <property type="protein sequence ID" value="AAF79528.1"/>
    <property type="status" value="ALT_INIT"/>
    <property type="molecule type" value="Genomic_DNA"/>
</dbReference>
<dbReference type="EMBL" id="AC051631">
    <property type="protein sequence ID" value="AAG51521.1"/>
    <property type="status" value="ALT_INIT"/>
    <property type="molecule type" value="Genomic_DNA"/>
</dbReference>
<dbReference type="EMBL" id="CP002684">
    <property type="protein sequence ID" value="AEE32241.1"/>
    <property type="molecule type" value="Genomic_DNA"/>
</dbReference>
<dbReference type="EMBL" id="AK176010">
    <property type="protein sequence ID" value="BAD43773.1"/>
    <property type="molecule type" value="mRNA"/>
</dbReference>
<dbReference type="EMBL" id="AK176676">
    <property type="protein sequence ID" value="BAD44439.1"/>
    <property type="molecule type" value="mRNA"/>
</dbReference>
<dbReference type="EMBL" id="BT015400">
    <property type="protein sequence ID" value="AAU05523.1"/>
    <property type="molecule type" value="mRNA"/>
</dbReference>
<dbReference type="RefSeq" id="NP_175238.2">
    <property type="nucleotide sequence ID" value="NM_103700.4"/>
</dbReference>
<dbReference type="SMR" id="Q9LNF4"/>
<dbReference type="BioGRID" id="26447">
    <property type="interactions" value="9"/>
</dbReference>
<dbReference type="FunCoup" id="Q9LNF4">
    <property type="interactions" value="15"/>
</dbReference>
<dbReference type="IntAct" id="Q9LNF4">
    <property type="interactions" value="9"/>
</dbReference>
<dbReference type="iPTMnet" id="Q9LNF4"/>
<dbReference type="PaxDb" id="3702-AT1G48040.1"/>
<dbReference type="ProteomicsDB" id="248701"/>
<dbReference type="EnsemblPlants" id="AT1G48040.1">
    <property type="protein sequence ID" value="AT1G48040.1"/>
    <property type="gene ID" value="AT1G48040"/>
</dbReference>
<dbReference type="GeneID" id="841222"/>
<dbReference type="Gramene" id="AT1G48040.1">
    <property type="protein sequence ID" value="AT1G48040.1"/>
    <property type="gene ID" value="AT1G48040"/>
</dbReference>
<dbReference type="KEGG" id="ath:AT1G48040"/>
<dbReference type="Araport" id="AT1G48040"/>
<dbReference type="TAIR" id="AT1G48040"/>
<dbReference type="eggNOG" id="KOG0698">
    <property type="taxonomic scope" value="Eukaryota"/>
</dbReference>
<dbReference type="HOGENOM" id="CLU_013173_21_0_1"/>
<dbReference type="InParanoid" id="Q9LNF4"/>
<dbReference type="OMA" id="ICQQSIP"/>
<dbReference type="PhylomeDB" id="Q9LNF4"/>
<dbReference type="PRO" id="PR:Q9LNF4"/>
<dbReference type="Proteomes" id="UP000006548">
    <property type="component" value="Chromosome 1"/>
</dbReference>
<dbReference type="ExpressionAtlas" id="Q9LNF4">
    <property type="expression patterns" value="baseline and differential"/>
</dbReference>
<dbReference type="GO" id="GO:0046872">
    <property type="term" value="F:metal ion binding"/>
    <property type="evidence" value="ECO:0007669"/>
    <property type="project" value="UniProtKB-KW"/>
</dbReference>
<dbReference type="GO" id="GO:0004722">
    <property type="term" value="F:protein serine/threonine phosphatase activity"/>
    <property type="evidence" value="ECO:0007669"/>
    <property type="project" value="UniProtKB-EC"/>
</dbReference>
<dbReference type="CDD" id="cd00143">
    <property type="entry name" value="PP2Cc"/>
    <property type="match status" value="1"/>
</dbReference>
<dbReference type="FunFam" id="3.60.40.10:FF:000004">
    <property type="entry name" value="Probable protein phosphatase 2C 22"/>
    <property type="match status" value="1"/>
</dbReference>
<dbReference type="Gene3D" id="3.60.40.10">
    <property type="entry name" value="PPM-type phosphatase domain"/>
    <property type="match status" value="1"/>
</dbReference>
<dbReference type="InterPro" id="IPR015655">
    <property type="entry name" value="PP2C"/>
</dbReference>
<dbReference type="InterPro" id="IPR000222">
    <property type="entry name" value="PP2C_BS"/>
</dbReference>
<dbReference type="InterPro" id="IPR036457">
    <property type="entry name" value="PPM-type-like_dom_sf"/>
</dbReference>
<dbReference type="InterPro" id="IPR001932">
    <property type="entry name" value="PPM-type_phosphatase-like_dom"/>
</dbReference>
<dbReference type="PANTHER" id="PTHR13832">
    <property type="entry name" value="PROTEIN PHOSPHATASE 2C"/>
    <property type="match status" value="1"/>
</dbReference>
<dbReference type="PANTHER" id="PTHR13832:SF620">
    <property type="entry name" value="PROTEIN PHOSPHATASE 2C 13-RELATED"/>
    <property type="match status" value="1"/>
</dbReference>
<dbReference type="Pfam" id="PF00481">
    <property type="entry name" value="PP2C"/>
    <property type="match status" value="1"/>
</dbReference>
<dbReference type="SMART" id="SM00331">
    <property type="entry name" value="PP2C_SIG"/>
    <property type="match status" value="1"/>
</dbReference>
<dbReference type="SMART" id="SM00332">
    <property type="entry name" value="PP2Cc"/>
    <property type="match status" value="1"/>
</dbReference>
<dbReference type="SUPFAM" id="SSF81606">
    <property type="entry name" value="PP2C-like"/>
    <property type="match status" value="1"/>
</dbReference>
<dbReference type="PROSITE" id="PS01032">
    <property type="entry name" value="PPM_1"/>
    <property type="match status" value="1"/>
</dbReference>
<dbReference type="PROSITE" id="PS51746">
    <property type="entry name" value="PPM_2"/>
    <property type="match status" value="1"/>
</dbReference>
<sequence>MILSQTMVAEAEIRVLDVKCHISAPKDQKNFQIDEVRVSESVRAEISGSAETPRFGSGMSCVTTTIGESASDFIPTIRSGSFADIRSRETMEDEHICIDDLSAHLGSYNFSVPSAFYGVFDGHGGPEAAIFMKENLTRLFFQDAVFPEMPSIVDAFFLEELENSHRKAFALADLAMADETIVSGSCGTTALTALIIGRHLLVANAGDCRAVLCRRGVAVDMSFDHRSTYEPERRRIEDLGGYFEDGYLNGVLAVTRAIGDWELKNPFTDSSSPLISDPEIGQIILTEDDEFLILACDGIWDVLSSQNAVSNVRQGLRRHGDPRQCAMELGKEAARLQSSDNMTVIVICFSSVPSSPKQPQRRRLRFCVSDEARARLQAMLAGE</sequence>
<proteinExistence type="evidence at transcript level"/>